<evidence type="ECO:0000255" key="1">
    <source>
        <dbReference type="HAMAP-Rule" id="MF_04068"/>
    </source>
</evidence>
<gene>
    <name evidence="1" type="primary">M</name>
</gene>
<reference key="1">
    <citation type="journal article" date="1998" name="Arch. Virol.">
        <title>Phylogenetic analyses of the matrix and non-structural genes of equine influenza viruses.</title>
        <authorList>
            <person name="Lindstrom S."/>
            <person name="Endo A."/>
            <person name="Sugita S."/>
            <person name="Pecoraro M."/>
            <person name="Hiromoto Y."/>
            <person name="Kamada M."/>
            <person name="Takahashi T."/>
            <person name="Nerome K."/>
        </authorList>
    </citation>
    <scope>NUCLEOTIDE SEQUENCE [GENOMIC RNA]</scope>
</reference>
<comment type="function">
    <text evidence="1">Plays critical roles in virus replication, from virus entry and uncoating to assembly and budding of the virus particle. M1 binding to ribonucleocapsids (RNPs) in nucleus seems to inhibit viral transcription. Interaction of viral NEP with M1-RNP is thought to promote nuclear export of the complex, which is targeted to the virion assembly site at the apical plasma membrane in polarized epithelial cells. Interactions with NA and HA may bring M1, a non-raft-associated protein, into lipid rafts. Forms a continuous shell on the inner side of the lipid bilayer in virion, where it binds the RNP. During virus entry into cell, the M2 ion channel acidifies the internal virion core, inducing M1 dissociation from the RNP. M1-free RNPs are transported to the nucleus, where viral transcription and replication can take place.</text>
</comment>
<comment type="function">
    <text evidence="1">Determines the virion's shape: spherical or filamentous. Clinical isolates of influenza are characterized by the presence of significant proportion of filamentous virions, whereas after multiple passage on eggs or cell culture, virions have only spherical morphology. Filamentous virions are thought to be important to infect neighboring cells, and spherical virions more suited to spread through aerosol between hosts organisms.</text>
</comment>
<comment type="subunit">
    <text evidence="1">Homodimer and homomultimer. Interacts with NEP. Binds ribonucleocapsid by both interacting with genomic RNA and NP protein. May interact with HA and NA. Cannot bind NP without genomic RNA.</text>
</comment>
<comment type="subcellular location">
    <subcellularLocation>
        <location evidence="1">Virion membrane</location>
        <topology evidence="1">Peripheral membrane protein</topology>
        <orientation evidence="1">Cytoplasmic side</orientation>
    </subcellularLocation>
    <subcellularLocation>
        <location evidence="1">Host nucleus</location>
    </subcellularLocation>
</comment>
<comment type="alternative products">
    <event type="alternative splicing"/>
    <isoform>
        <id>Q9W9L6-1</id>
        <name>M1</name>
        <sequence type="displayed"/>
    </isoform>
    <isoform>
        <id>Q77ZJ9-1</id>
        <name>M2</name>
        <sequence type="external"/>
    </isoform>
    <text>Only the first 9 residues are shared by the 2 isoforms.</text>
</comment>
<comment type="miscellaneous">
    <text evidence="1">Most abundant protein in virion. When expressed alone can form virus-like particles in transfected cells.</text>
</comment>
<comment type="similarity">
    <text evidence="1">Belongs to the influenza viruses Matrix protein M1 family.</text>
</comment>
<keyword id="KW-0025">Alternative splicing</keyword>
<keyword id="KW-1048">Host nucleus</keyword>
<keyword id="KW-0472">Membrane</keyword>
<keyword id="KW-0694">RNA-binding</keyword>
<keyword id="KW-0468">Viral matrix protein</keyword>
<keyword id="KW-0946">Virion</keyword>
<dbReference type="EMBL" id="AF001686">
    <property type="protein sequence ID" value="AAC31296.1"/>
    <property type="molecule type" value="Genomic_RNA"/>
</dbReference>
<dbReference type="SMR" id="Q9W9L6"/>
<dbReference type="GO" id="GO:0042025">
    <property type="term" value="C:host cell nucleus"/>
    <property type="evidence" value="ECO:0007669"/>
    <property type="project" value="UniProtKB-SubCell"/>
</dbReference>
<dbReference type="GO" id="GO:0016020">
    <property type="term" value="C:membrane"/>
    <property type="evidence" value="ECO:0007669"/>
    <property type="project" value="UniProtKB-KW"/>
</dbReference>
<dbReference type="GO" id="GO:0055036">
    <property type="term" value="C:virion membrane"/>
    <property type="evidence" value="ECO:0007669"/>
    <property type="project" value="UniProtKB-SubCell"/>
</dbReference>
<dbReference type="GO" id="GO:0003723">
    <property type="term" value="F:RNA binding"/>
    <property type="evidence" value="ECO:0007669"/>
    <property type="project" value="UniProtKB-UniRule"/>
</dbReference>
<dbReference type="GO" id="GO:0039660">
    <property type="term" value="F:structural constituent of virion"/>
    <property type="evidence" value="ECO:0007669"/>
    <property type="project" value="UniProtKB-UniRule"/>
</dbReference>
<dbReference type="GO" id="GO:0046761">
    <property type="term" value="P:viral budding from plasma membrane"/>
    <property type="evidence" value="ECO:0007669"/>
    <property type="project" value="UniProtKB-UniRule"/>
</dbReference>
<dbReference type="FunFam" id="1.10.10.180:FF:000001">
    <property type="entry name" value="Matrix protein 1"/>
    <property type="match status" value="1"/>
</dbReference>
<dbReference type="FunFam" id="1.20.91.10:FF:000001">
    <property type="entry name" value="Matrix protein 1"/>
    <property type="match status" value="1"/>
</dbReference>
<dbReference type="Gene3D" id="1.10.10.180">
    <property type="match status" value="1"/>
</dbReference>
<dbReference type="Gene3D" id="1.20.91.10">
    <property type="match status" value="1"/>
</dbReference>
<dbReference type="HAMAP" id="MF_04068">
    <property type="entry name" value="INFV_M1"/>
    <property type="match status" value="1"/>
</dbReference>
<dbReference type="InterPro" id="IPR036039">
    <property type="entry name" value="Flu_matrix_M1"/>
</dbReference>
<dbReference type="InterPro" id="IPR013188">
    <property type="entry name" value="Flu_matrix_M1_C"/>
</dbReference>
<dbReference type="InterPro" id="IPR001561">
    <property type="entry name" value="Flu_matrix_M1_N"/>
</dbReference>
<dbReference type="InterPro" id="IPR015423">
    <property type="entry name" value="Flu_matrix_M1_N_sub1"/>
</dbReference>
<dbReference type="InterPro" id="IPR015799">
    <property type="entry name" value="Flu_matrix_M1_N_sub2"/>
</dbReference>
<dbReference type="InterPro" id="IPR037533">
    <property type="entry name" value="INFV_M1"/>
</dbReference>
<dbReference type="Pfam" id="PF00598">
    <property type="entry name" value="Flu_M1"/>
    <property type="match status" value="1"/>
</dbReference>
<dbReference type="Pfam" id="PF08289">
    <property type="entry name" value="Flu_M1_C"/>
    <property type="match status" value="1"/>
</dbReference>
<dbReference type="SMART" id="SM00759">
    <property type="entry name" value="Flu_M1_C"/>
    <property type="match status" value="1"/>
</dbReference>
<dbReference type="SUPFAM" id="SSF48145">
    <property type="entry name" value="Influenza virus matrix protein M1"/>
    <property type="match status" value="1"/>
</dbReference>
<name>M1_I77A9</name>
<organism>
    <name type="scientific">Influenza A virus (strain A/Equine/New Market/1/1977 H7N7)</name>
    <dbReference type="NCBI Taxonomy" id="217831"/>
    <lineage>
        <taxon>Viruses</taxon>
        <taxon>Riboviria</taxon>
        <taxon>Orthornavirae</taxon>
        <taxon>Negarnaviricota</taxon>
        <taxon>Polyploviricotina</taxon>
        <taxon>Insthoviricetes</taxon>
        <taxon>Articulavirales</taxon>
        <taxon>Orthomyxoviridae</taxon>
        <taxon>Alphainfluenzavirus</taxon>
        <taxon>Alphainfluenzavirus influenzae</taxon>
        <taxon>Influenza A virus</taxon>
    </lineage>
</organism>
<protein>
    <recommendedName>
        <fullName evidence="1">Matrix protein 1</fullName>
        <shortName evidence="1">M1</shortName>
    </recommendedName>
</protein>
<sequence>MSLLTEVETYVLSIVPSGPLKAEIAQRLEDVFAGKNTDLEALMEWLKTRPILSPLTKGILGFVFTLTVPSERGLQRRRFVQNALNGNGDPNNMDRAVKLYRKLKREITFHGAKEVALSYSTGALASCMGLIYNRMGTVTTEVAFGLVCATCEQIADSQHRSHRQMVTTTNPLIRHENRMVLASTTAKAMEQMAGSSEQAAEAMEVASQARQMVQAMRTIGTHPSSSAGLKNDLLENLQAYQKRMGVQMQRFK</sequence>
<organismHost>
    <name type="scientific">Aves</name>
    <dbReference type="NCBI Taxonomy" id="8782"/>
</organismHost>
<organismHost>
    <name type="scientific">Equus caballus</name>
    <name type="common">Horse</name>
    <dbReference type="NCBI Taxonomy" id="9796"/>
</organismHost>
<organismHost>
    <name type="scientific">Homo sapiens</name>
    <name type="common">Human</name>
    <dbReference type="NCBI Taxonomy" id="9606"/>
</organismHost>
<organismHost>
    <name type="scientific">Phocidae</name>
    <name type="common">true seals</name>
    <dbReference type="NCBI Taxonomy" id="9709"/>
</organismHost>
<accession>Q9W9L6</accession>
<proteinExistence type="inferred from homology"/>
<feature type="chain" id="PRO_0000326299" description="Matrix protein 1">
    <location>
        <begin position="1"/>
        <end position="252"/>
    </location>
</feature>
<feature type="region of interest" description="Membrane-binding" evidence="1">
    <location>
        <begin position="1"/>
        <end position="164"/>
    </location>
</feature>
<feature type="region of interest" description="RNP-binding" evidence="1">
    <location>
        <begin position="165"/>
        <end position="252"/>
    </location>
</feature>
<feature type="short sequence motif" description="Nuclear localization signal" evidence="1">
    <location>
        <begin position="101"/>
        <end position="105"/>
    </location>
</feature>